<comment type="function">
    <text evidence="6">Catalyzes the conversion of geranylgeranyl diphosphate to the phytoalexin precursor ent-copalyl diphosphate.</text>
</comment>
<comment type="catalytic activity">
    <reaction evidence="6">
        <text>(2E,6E,10E)-geranylgeranyl diphosphate = ent-copalyl diphosphate</text>
        <dbReference type="Rhea" id="RHEA:14841"/>
        <dbReference type="ChEBI" id="CHEBI:58553"/>
        <dbReference type="ChEBI" id="CHEBI:58756"/>
        <dbReference type="EC" id="5.5.1.13"/>
    </reaction>
    <physiologicalReaction direction="left-to-right" evidence="6">
        <dbReference type="Rhea" id="RHEA:14842"/>
    </physiologicalReaction>
</comment>
<comment type="cofactor">
    <cofactor evidence="9">
        <name>Mg(2+)</name>
        <dbReference type="ChEBI" id="CHEBI:18420"/>
    </cofactor>
</comment>
<comment type="pathway">
    <text evidence="6">Secondary metabolite biosynthesis; terpenoid biosynthesis.</text>
</comment>
<comment type="subcellular location">
    <subcellularLocation>
        <location evidence="3">Plastid</location>
        <location evidence="3">Chloroplast</location>
    </subcellularLocation>
</comment>
<comment type="induction">
    <text evidence="5 6">By UV irradiation.</text>
</comment>
<comment type="domain">
    <text evidence="9">The Asp-Xaa-Asp-Asp (DXDD) motif is important for the catalytic activity, presumably through binding to Mg(2+).</text>
</comment>
<comment type="miscellaneous">
    <text>2 different ent-CDP synthases exist in rice, one being involved in gibberellin biosynthesis and the other in phytoalexins biosynthesis. Phytoalexins are diterpenoid secondary metabolites involved in the defense mechanism of the plant and produced in response to attack (by a pathogen, elicitor or UV irradiation).</text>
</comment>
<comment type="similarity">
    <text evidence="9">Belongs to the terpene synthase family.</text>
</comment>
<comment type="sequence caution" evidence="9">
    <conflict type="frameshift">
        <sequence resource="EMBL-CDS" id="BAD42452"/>
    </conflict>
</comment>
<comment type="sequence caution" evidence="9">
    <conflict type="erroneous gene model prediction">
        <sequence resource="EMBL-CDS" id="BAF09103"/>
    </conflict>
</comment>
<protein>
    <recommendedName>
        <fullName evidence="8">Ent-copalyl diphosphate synthase 2, chloroplastic</fullName>
        <shortName evidence="8">Ent-CDP synthase 2</shortName>
        <shortName evidence="8">OsCPS2</shortName>
        <shortName evidence="8">OsCPS2ent</shortName>
        <ecNumber evidence="6">5.5.1.13</ecNumber>
    </recommendedName>
    <alternativeName>
        <fullName evidence="7">Diterpene cyclase 2</fullName>
        <shortName evidence="7">OsCyc2</shortName>
    </alternativeName>
    <alternativeName>
        <fullName>Ent-kaurene synthase A</fullName>
    </alternativeName>
</protein>
<feature type="transit peptide" description="Chloroplast" evidence="3">
    <location>
        <begin position="1"/>
        <end position="47"/>
    </location>
</feature>
<feature type="chain" id="PRO_0000372326" description="Ent-copalyl diphosphate synthase 2, chloroplastic">
    <location>
        <begin position="48"/>
        <end position="800"/>
    </location>
</feature>
<feature type="region of interest" description="Disordered" evidence="4">
    <location>
        <begin position="52"/>
        <end position="80"/>
    </location>
</feature>
<feature type="short sequence motif" description="DXDD motif" evidence="9">
    <location>
        <begin position="374"/>
        <end position="377"/>
    </location>
</feature>
<feature type="compositionally biased region" description="Basic and acidic residues" evidence="4">
    <location>
        <begin position="55"/>
        <end position="69"/>
    </location>
</feature>
<feature type="binding site" evidence="2">
    <location>
        <position position="242"/>
    </location>
    <ligand>
        <name>substrate</name>
    </ligand>
</feature>
<feature type="binding site" evidence="1">
    <location>
        <position position="374"/>
    </location>
    <ligand>
        <name>Mg(2+)</name>
        <dbReference type="ChEBI" id="CHEBI:18420"/>
    </ligand>
</feature>
<feature type="binding site" evidence="1">
    <location>
        <position position="376"/>
    </location>
    <ligand>
        <name>Mg(2+)</name>
        <dbReference type="ChEBI" id="CHEBI:18420"/>
    </ligand>
</feature>
<feature type="binding site" evidence="2">
    <location>
        <position position="461"/>
    </location>
    <ligand>
        <name>substrate</name>
    </ligand>
</feature>
<feature type="sequence conflict" description="In Ref. 1; BAD42452." evidence="9" ref="1">
    <original>G</original>
    <variation>D</variation>
    <location>
        <position position="73"/>
    </location>
</feature>
<feature type="sequence conflict" description="In Ref. 1; BAD42452." evidence="9" ref="1">
    <original>G</original>
    <variation>D</variation>
    <location>
        <position position="604"/>
    </location>
</feature>
<feature type="sequence conflict" description="In Ref. 1; BAD42452." evidence="9" ref="1">
    <original>D</original>
    <variation>N</variation>
    <location>
        <position position="653"/>
    </location>
</feature>
<dbReference type="EC" id="5.5.1.13" evidence="6"/>
<dbReference type="EMBL" id="AB066271">
    <property type="protein sequence ID" value="BAD42452.1"/>
    <property type="status" value="ALT_FRAME"/>
    <property type="molecule type" value="mRNA"/>
</dbReference>
<dbReference type="EMBL" id="AP005114">
    <property type="protein sequence ID" value="BAD17267.1"/>
    <property type="molecule type" value="Genomic_DNA"/>
</dbReference>
<dbReference type="EMBL" id="AP008208">
    <property type="protein sequence ID" value="BAF09103.1"/>
    <property type="status" value="ALT_SEQ"/>
    <property type="molecule type" value="Genomic_DNA"/>
</dbReference>
<dbReference type="EMBL" id="AP014958">
    <property type="status" value="NOT_ANNOTATED_CDS"/>
    <property type="molecule type" value="Genomic_DNA"/>
</dbReference>
<dbReference type="EMBL" id="CM000139">
    <property type="protein sequence ID" value="EAZ23513.1"/>
    <property type="molecule type" value="Genomic_DNA"/>
</dbReference>
<dbReference type="RefSeq" id="XP_015625954.1">
    <property type="nucleotide sequence ID" value="XM_015770468.1"/>
</dbReference>
<dbReference type="SMR" id="Q6Z5I0"/>
<dbReference type="FunCoup" id="Q6Z5I0">
    <property type="interactions" value="43"/>
</dbReference>
<dbReference type="STRING" id="39947.Q6Z5I0"/>
<dbReference type="PaxDb" id="39947-Q6Z5I0"/>
<dbReference type="EnsemblPlants" id="Os02t0571100-01">
    <property type="protein sequence ID" value="Os02t0571100-01"/>
    <property type="gene ID" value="Os02g0571100"/>
</dbReference>
<dbReference type="Gramene" id="Os02t0571100-01">
    <property type="protein sequence ID" value="Os02t0571100-01"/>
    <property type="gene ID" value="Os02g0571100"/>
</dbReference>
<dbReference type="eggNOG" id="ENOG502QQN6">
    <property type="taxonomic scope" value="Eukaryota"/>
</dbReference>
<dbReference type="HOGENOM" id="CLU_003125_3_3_1"/>
<dbReference type="InParanoid" id="Q6Z5I0"/>
<dbReference type="OrthoDB" id="2343925at2759"/>
<dbReference type="BioCyc" id="MetaCyc:CYC2-MONOMER"/>
<dbReference type="BRENDA" id="5.5.1.13">
    <property type="organism ID" value="4460"/>
</dbReference>
<dbReference type="UniPathway" id="UPA00213"/>
<dbReference type="Proteomes" id="UP000000763">
    <property type="component" value="Chromosome 2"/>
</dbReference>
<dbReference type="Proteomes" id="UP000007752">
    <property type="component" value="Chromosome 2"/>
</dbReference>
<dbReference type="Proteomes" id="UP000059680">
    <property type="component" value="Chromosome 2"/>
</dbReference>
<dbReference type="ExpressionAtlas" id="Q6Z5I0">
    <property type="expression patterns" value="baseline and differential"/>
</dbReference>
<dbReference type="GO" id="GO:0009507">
    <property type="term" value="C:chloroplast"/>
    <property type="evidence" value="ECO:0000318"/>
    <property type="project" value="GO_Central"/>
</dbReference>
<dbReference type="GO" id="GO:0009905">
    <property type="term" value="F:ent-copalyl diphosphate synthase activity"/>
    <property type="evidence" value="ECO:0007669"/>
    <property type="project" value="UniProtKB-EC"/>
</dbReference>
<dbReference type="GO" id="GO:0000287">
    <property type="term" value="F:magnesium ion binding"/>
    <property type="evidence" value="ECO:0000318"/>
    <property type="project" value="GO_Central"/>
</dbReference>
<dbReference type="GO" id="GO:0010333">
    <property type="term" value="F:terpene synthase activity"/>
    <property type="evidence" value="ECO:0000318"/>
    <property type="project" value="GO_Central"/>
</dbReference>
<dbReference type="GO" id="GO:0006952">
    <property type="term" value="P:defense response"/>
    <property type="evidence" value="ECO:0007669"/>
    <property type="project" value="UniProtKB-KW"/>
</dbReference>
<dbReference type="GO" id="GO:0009686">
    <property type="term" value="P:gibberellin biosynthetic process"/>
    <property type="evidence" value="ECO:0000318"/>
    <property type="project" value="GO_Central"/>
</dbReference>
<dbReference type="GO" id="GO:0009685">
    <property type="term" value="P:gibberellin metabolic process"/>
    <property type="evidence" value="ECO:0000305"/>
    <property type="project" value="Gramene"/>
</dbReference>
<dbReference type="FunFam" id="1.10.600.10:FF:000024">
    <property type="entry name" value="Ent-copalyl diphosphate synthase"/>
    <property type="match status" value="1"/>
</dbReference>
<dbReference type="FunFam" id="1.50.10.160:FF:000001">
    <property type="entry name" value="Ent-copalyl diphosphate synthase"/>
    <property type="match status" value="1"/>
</dbReference>
<dbReference type="FunFam" id="1.50.10.130:FF:000002">
    <property type="entry name" value="Ent-copalyl diphosphate synthase, chloroplastic"/>
    <property type="match status" value="1"/>
</dbReference>
<dbReference type="Gene3D" id="1.50.10.160">
    <property type="match status" value="1"/>
</dbReference>
<dbReference type="Gene3D" id="1.10.600.10">
    <property type="entry name" value="Farnesyl Diphosphate Synthase"/>
    <property type="match status" value="1"/>
</dbReference>
<dbReference type="Gene3D" id="1.50.10.130">
    <property type="entry name" value="Terpene synthase, N-terminal domain"/>
    <property type="match status" value="1"/>
</dbReference>
<dbReference type="InterPro" id="IPR008949">
    <property type="entry name" value="Isoprenoid_synthase_dom_sf"/>
</dbReference>
<dbReference type="InterPro" id="IPR001906">
    <property type="entry name" value="Terpene_synth_N"/>
</dbReference>
<dbReference type="InterPro" id="IPR036965">
    <property type="entry name" value="Terpene_synth_N_sf"/>
</dbReference>
<dbReference type="InterPro" id="IPR050148">
    <property type="entry name" value="Terpene_synthase-like"/>
</dbReference>
<dbReference type="InterPro" id="IPR008930">
    <property type="entry name" value="Terpenoid_cyclase/PrenylTrfase"/>
</dbReference>
<dbReference type="PANTHER" id="PTHR31739">
    <property type="entry name" value="ENT-COPALYL DIPHOSPHATE SYNTHASE, CHLOROPLASTIC"/>
    <property type="match status" value="1"/>
</dbReference>
<dbReference type="PANTHER" id="PTHR31739:SF4">
    <property type="entry name" value="ENT-COPALYL DIPHOSPHATE SYNTHASE, CHLOROPLASTIC"/>
    <property type="match status" value="1"/>
</dbReference>
<dbReference type="Pfam" id="PF01397">
    <property type="entry name" value="Terpene_synth"/>
    <property type="match status" value="1"/>
</dbReference>
<dbReference type="SFLD" id="SFLDG01014">
    <property type="entry name" value="Terpene_Cyclase_Like_1_N-term"/>
    <property type="match status" value="1"/>
</dbReference>
<dbReference type="SFLD" id="SFLDG01605">
    <property type="entry name" value="Terpene_Cyclase_Like_1_N-term"/>
    <property type="match status" value="1"/>
</dbReference>
<dbReference type="SUPFAM" id="SSF48239">
    <property type="entry name" value="Terpenoid cyclases/Protein prenyltransferases"/>
    <property type="match status" value="2"/>
</dbReference>
<dbReference type="SUPFAM" id="SSF48576">
    <property type="entry name" value="Terpenoid synthases"/>
    <property type="match status" value="1"/>
</dbReference>
<sequence length="800" mass="89937">MQMQVLTAASSLPRATLLRPAAAEPWRQSFLQLQARPIQRPGIMLHCKAQLQGQETRERRQLDDDEHARPPQGGDDDVAASTSELPYMIESIKSKLRAARNSLGETTVSAYDTAWIALVNRLDGGGERSPQFPEAIDWIARNQLPDGSWGDAGMFIVQDRLINTLGCVVALATWGVHEEQRARGLAYIQDNLWRLGEDDEEWMMVGFEITFPVLLEKAKNLGLDINYDDPALQDIYAKRQLKLAKIPREALHARPTTLLHSLEGMENLDWERLLQFKCPAGSLHSSPAASAYALSETGDKELLEYLETAINNFDGGAPCTYPVDNFDRLWSVDRLRRLGISRYFTSEIEEYLEYAYRHLSPDGMSYGGLCPVKDIDDTAMAFRLLRLHGYNVSSSVFNHFEKDGEYFCFAGQSSQSLTAMYNSYRASQIVFPGDDDGLEQLRAYCRAFLEERRATGNLMDKWVIANGLPSEVEYALDFPWKASLPRVETRVYLEQYGASEDAWIGKGLYRMTLVNNDLYLEAAKADFTNFQRLSRLEWLSLKRWYIRNNLQAHGVTEQSVLRAYFLAAANIFEPNRAAERLGWARTAILAEAIASHLRQYSANGAADGMTERLISGLASHDWDWRESKDSAARSLLYALDELIDLHAFGNASDSLREAWKQWLMSWTNESQGSTGGDTALLLVRTIEICSGRHGSAEQSLKNSADYARLEQIASSMCSKLATKILAQNGGSMDNVEGIDQEVDVEMKELIQRVYGSSSNDVSSVTRQTFLDVVKSFCYVAHCSPETIDGHISKVLFEDVN</sequence>
<gene>
    <name evidence="8" type="primary">CPS2</name>
    <name evidence="7" type="synonym">CYC2</name>
    <name evidence="9" type="ordered locus">Os02g0571100</name>
    <name evidence="9" type="ordered locus">LOC_Os02g36210</name>
    <name evidence="11" type="ORF">OsJ_006996</name>
    <name evidence="10" type="ORF">P0689H05.16</name>
</gene>
<evidence type="ECO:0000250" key="1">
    <source>
        <dbReference type="UniProtKB" id="C7BKP9"/>
    </source>
</evidence>
<evidence type="ECO:0000250" key="2">
    <source>
        <dbReference type="UniProtKB" id="Q38802"/>
    </source>
</evidence>
<evidence type="ECO:0000255" key="3"/>
<evidence type="ECO:0000256" key="4">
    <source>
        <dbReference type="SAM" id="MobiDB-lite"/>
    </source>
</evidence>
<evidence type="ECO:0000269" key="5">
    <source>
    </source>
</evidence>
<evidence type="ECO:0000269" key="6">
    <source>
    </source>
</evidence>
<evidence type="ECO:0000303" key="7">
    <source>
    </source>
</evidence>
<evidence type="ECO:0000303" key="8">
    <source>
    </source>
</evidence>
<evidence type="ECO:0000305" key="9"/>
<evidence type="ECO:0000312" key="10">
    <source>
        <dbReference type="EMBL" id="BAD17267.1"/>
    </source>
</evidence>
<evidence type="ECO:0000312" key="11">
    <source>
        <dbReference type="EMBL" id="EAZ23513.1"/>
    </source>
</evidence>
<accession>Q6Z5I0</accession>
<accession>Q0E085</accession>
<accession>Q68CL9</accession>
<name>CPS2_ORYSJ</name>
<organism>
    <name type="scientific">Oryza sativa subsp. japonica</name>
    <name type="common">Rice</name>
    <dbReference type="NCBI Taxonomy" id="39947"/>
    <lineage>
        <taxon>Eukaryota</taxon>
        <taxon>Viridiplantae</taxon>
        <taxon>Streptophyta</taxon>
        <taxon>Embryophyta</taxon>
        <taxon>Tracheophyta</taxon>
        <taxon>Spermatophyta</taxon>
        <taxon>Magnoliopsida</taxon>
        <taxon>Liliopsida</taxon>
        <taxon>Poales</taxon>
        <taxon>Poaceae</taxon>
        <taxon>BOP clade</taxon>
        <taxon>Oryzoideae</taxon>
        <taxon>Oryzeae</taxon>
        <taxon>Oryzinae</taxon>
        <taxon>Oryza</taxon>
        <taxon>Oryza sativa</taxon>
    </lineage>
</organism>
<keyword id="KW-0150">Chloroplast</keyword>
<keyword id="KW-0413">Isomerase</keyword>
<keyword id="KW-0460">Magnesium</keyword>
<keyword id="KW-0479">Metal-binding</keyword>
<keyword id="KW-0611">Plant defense</keyword>
<keyword id="KW-0934">Plastid</keyword>
<keyword id="KW-1185">Reference proteome</keyword>
<keyword id="KW-0809">Transit peptide</keyword>
<proteinExistence type="evidence at protein level"/>
<reference key="1">
    <citation type="journal article" date="2004" name="Plant J.">
        <title>Biological functions of ent- and syn-copalyl diphosphate synthases in rice: key enzymes for the branch point of gibberellin and phytoalexin biosynthesis.</title>
        <authorList>
            <person name="Ootomo K."/>
            <person name="Kenmoku H."/>
            <person name="Oikawa H."/>
            <person name="Koenig W.A."/>
            <person name="Toshima H."/>
            <person name="Mitsuhashi W."/>
            <person name="Yamane H."/>
            <person name="Sassa T."/>
            <person name="Toyomasu T."/>
        </authorList>
    </citation>
    <scope>NUCLEOTIDE SEQUENCE [MRNA]</scope>
    <scope>INDUCTION</scope>
    <source>
        <strain>cv. Nipponbare</strain>
    </source>
</reference>
<reference key="2">
    <citation type="journal article" date="2005" name="Nature">
        <title>The map-based sequence of the rice genome.</title>
        <authorList>
            <consortium name="International rice genome sequencing project (IRGSP)"/>
        </authorList>
    </citation>
    <scope>NUCLEOTIDE SEQUENCE [LARGE SCALE GENOMIC DNA]</scope>
    <source>
        <strain>cv. Nipponbare</strain>
    </source>
</reference>
<reference key="3">
    <citation type="journal article" date="2008" name="Nucleic Acids Res.">
        <title>The rice annotation project database (RAP-DB): 2008 update.</title>
        <authorList>
            <consortium name="The rice annotation project (RAP)"/>
        </authorList>
    </citation>
    <scope>GENOME REANNOTATION</scope>
    <source>
        <strain>cv. Nipponbare</strain>
    </source>
</reference>
<reference key="4">
    <citation type="journal article" date="2013" name="Rice">
        <title>Improvement of the Oryza sativa Nipponbare reference genome using next generation sequence and optical map data.</title>
        <authorList>
            <person name="Kawahara Y."/>
            <person name="de la Bastide M."/>
            <person name="Hamilton J.P."/>
            <person name="Kanamori H."/>
            <person name="McCombie W.R."/>
            <person name="Ouyang S."/>
            <person name="Schwartz D.C."/>
            <person name="Tanaka T."/>
            <person name="Wu J."/>
            <person name="Zhou S."/>
            <person name="Childs K.L."/>
            <person name="Davidson R.M."/>
            <person name="Lin H."/>
            <person name="Quesada-Ocampo L."/>
            <person name="Vaillancourt B."/>
            <person name="Sakai H."/>
            <person name="Lee S.S."/>
            <person name="Kim J."/>
            <person name="Numa H."/>
            <person name="Itoh T."/>
            <person name="Buell C.R."/>
            <person name="Matsumoto T."/>
        </authorList>
    </citation>
    <scope>GENOME REANNOTATION</scope>
    <source>
        <strain>cv. Nipponbare</strain>
    </source>
</reference>
<reference key="5">
    <citation type="journal article" date="2005" name="PLoS Biol.">
        <title>The genomes of Oryza sativa: a history of duplications.</title>
        <authorList>
            <person name="Yu J."/>
            <person name="Wang J."/>
            <person name="Lin W."/>
            <person name="Li S."/>
            <person name="Li H."/>
            <person name="Zhou J."/>
            <person name="Ni P."/>
            <person name="Dong W."/>
            <person name="Hu S."/>
            <person name="Zeng C."/>
            <person name="Zhang J."/>
            <person name="Zhang Y."/>
            <person name="Li R."/>
            <person name="Xu Z."/>
            <person name="Li S."/>
            <person name="Li X."/>
            <person name="Zheng H."/>
            <person name="Cong L."/>
            <person name="Lin L."/>
            <person name="Yin J."/>
            <person name="Geng J."/>
            <person name="Li G."/>
            <person name="Shi J."/>
            <person name="Liu J."/>
            <person name="Lv H."/>
            <person name="Li J."/>
            <person name="Wang J."/>
            <person name="Deng Y."/>
            <person name="Ran L."/>
            <person name="Shi X."/>
            <person name="Wang X."/>
            <person name="Wu Q."/>
            <person name="Li C."/>
            <person name="Ren X."/>
            <person name="Wang J."/>
            <person name="Wang X."/>
            <person name="Li D."/>
            <person name="Liu D."/>
            <person name="Zhang X."/>
            <person name="Ji Z."/>
            <person name="Zhao W."/>
            <person name="Sun Y."/>
            <person name="Zhang Z."/>
            <person name="Bao J."/>
            <person name="Han Y."/>
            <person name="Dong L."/>
            <person name="Ji J."/>
            <person name="Chen P."/>
            <person name="Wu S."/>
            <person name="Liu J."/>
            <person name="Xiao Y."/>
            <person name="Bu D."/>
            <person name="Tan J."/>
            <person name="Yang L."/>
            <person name="Ye C."/>
            <person name="Zhang J."/>
            <person name="Xu J."/>
            <person name="Zhou Y."/>
            <person name="Yu Y."/>
            <person name="Zhang B."/>
            <person name="Zhuang S."/>
            <person name="Wei H."/>
            <person name="Liu B."/>
            <person name="Lei M."/>
            <person name="Yu H."/>
            <person name="Li Y."/>
            <person name="Xu H."/>
            <person name="Wei S."/>
            <person name="He X."/>
            <person name="Fang L."/>
            <person name="Zhang Z."/>
            <person name="Zhang Y."/>
            <person name="Huang X."/>
            <person name="Su Z."/>
            <person name="Tong W."/>
            <person name="Li J."/>
            <person name="Tong Z."/>
            <person name="Li S."/>
            <person name="Ye J."/>
            <person name="Wang L."/>
            <person name="Fang L."/>
            <person name="Lei T."/>
            <person name="Chen C.-S."/>
            <person name="Chen H.-C."/>
            <person name="Xu Z."/>
            <person name="Li H."/>
            <person name="Huang H."/>
            <person name="Zhang F."/>
            <person name="Xu H."/>
            <person name="Li N."/>
            <person name="Zhao C."/>
            <person name="Li S."/>
            <person name="Dong L."/>
            <person name="Huang Y."/>
            <person name="Li L."/>
            <person name="Xi Y."/>
            <person name="Qi Q."/>
            <person name="Li W."/>
            <person name="Zhang B."/>
            <person name="Hu W."/>
            <person name="Zhang Y."/>
            <person name="Tian X."/>
            <person name="Jiao Y."/>
            <person name="Liang X."/>
            <person name="Jin J."/>
            <person name="Gao L."/>
            <person name="Zheng W."/>
            <person name="Hao B."/>
            <person name="Liu S.-M."/>
            <person name="Wang W."/>
            <person name="Yuan L."/>
            <person name="Cao M."/>
            <person name="McDermott J."/>
            <person name="Samudrala R."/>
            <person name="Wang J."/>
            <person name="Wong G.K.-S."/>
            <person name="Yang H."/>
        </authorList>
    </citation>
    <scope>NUCLEOTIDE SEQUENCE [LARGE SCALE GENOMIC DNA]</scope>
    <source>
        <strain>cv. Nipponbare</strain>
    </source>
</reference>
<reference key="6">
    <citation type="journal article" date="2004" name="Plant Physiol.">
        <title>Rice contains two disparate ent-copalyl diphosphate synthases with distinct metabolic functions.</title>
        <authorList>
            <person name="Prisic S."/>
            <person name="Xu M."/>
            <person name="Wilderman P.R."/>
            <person name="Peters R.J."/>
        </authorList>
    </citation>
    <scope>FUNCTION</scope>
    <scope>INDUCTION</scope>
    <scope>CATALYTIC ACTIVITY</scope>
    <scope>PATHWAY</scope>
    <source>
        <strain>cv. Nipponbare</strain>
    </source>
</reference>